<proteinExistence type="evidence at protein level"/>
<name>PUPB_PSEPU</name>
<protein>
    <recommendedName>
        <fullName evidence="4">Ferric-pyoverdine BN7/BN8 receptor</fullName>
    </recommendedName>
    <alternativeName>
        <fullName evidence="3">Ferric-pseudobactin BN7/BN8 receptor</fullName>
    </alternativeName>
</protein>
<sequence>MNHTARKRQGWQRSVSQKLAGAVVQGIACMGASAPLLLMPAWATAAAQAQADFDIPAGPLAPALAHFGQSAHILLSYPTALTEGRSTSGLAGRFDIDQGLAILLAGTGLEASRGANASYSLQASASTGALELSAVSISGKAPGSTTEGTGLYTTYSSSSSTRLNLTPRETPQSLTVMTRQRLDDQRLTNLTDALEATPGITVVRDGLGSESDSYWSRGFAIQNYEVDGVPTSTRLDNYSQSMAMFDRVEIVRGATGLISGMGNPSATINLIRKRPTAEAQASITGEAGNWDRYGTGFDVSGPLTETGNIRGRFVADYKTEKAWIDRYNQQSQLMYGITEFDLSEDTLLTVGFSYLRSDIDSPLRSGLPTRFSTGERTNLKRSLNAAPDWSYNDHEQTSFFTSIEQQLGNGWSGKIELTHAENKFDELFNFAMGELNPDGSGLSQLPVRFSGTPRQDNLDLYATGPFSLFGREHELITGMTLSQYRENTPSWGGWRYDYAGSPAGAIDNLFNWDGKSAKPAFVESGKSSIDEDQYAAYLTSRFSVTDDLSLILGSRLINWKRDTSDRPYGGEETEVNREENGVFIPYAGVGYDLDDTWSLYASYTKIFNPQGAWVTDESNKPLDPMEGVGYELGIKGTHLNGKLNSSLAVFKLEQDNLAIWQHDNVYSAEQDTTSKGIELELNGELAEGWQASAGYSYSVTTDADDQRINTNLPRNSFKTFTSYRLHGPLDKITIGGGVNWQSKVGADLHTFSQGSYAVTNLMARYDINQHLSASVNLNNVFDREYYSQSGLYGVYGTPRNVMTSFKYSF</sequence>
<accession>P38047</accession>
<evidence type="ECO:0000255" key="1"/>
<evidence type="ECO:0000255" key="2">
    <source>
        <dbReference type="PROSITE-ProRule" id="PRU01360"/>
    </source>
</evidence>
<evidence type="ECO:0000303" key="3">
    <source>
    </source>
</evidence>
<evidence type="ECO:0000305" key="4"/>
<reference key="1">
    <citation type="journal article" date="1993" name="Mol. Microbiol.">
        <title>Identification and characterization of the pupB gene encoding an inducible ferric-pseudobactin receptor of Pseudomonas putida WCS358.</title>
        <authorList>
            <person name="Koster M."/>
            <person name="van de Vossenberg J."/>
            <person name="Leong J."/>
            <person name="Weisbeek P.J."/>
        </authorList>
    </citation>
    <scope>NUCLEOTIDE SEQUENCE [GENOMIC DNA]</scope>
    <source>
        <strain>WCS358</strain>
    </source>
</reference>
<organism>
    <name type="scientific">Pseudomonas putida</name>
    <name type="common">Arthrobacter siderocapsulatus</name>
    <dbReference type="NCBI Taxonomy" id="303"/>
    <lineage>
        <taxon>Bacteria</taxon>
        <taxon>Pseudomonadati</taxon>
        <taxon>Pseudomonadota</taxon>
        <taxon>Gammaproteobacteria</taxon>
        <taxon>Pseudomonadales</taxon>
        <taxon>Pseudomonadaceae</taxon>
        <taxon>Pseudomonas</taxon>
    </lineage>
</organism>
<comment type="function">
    <text>Specific receptor for the siderophores ferric pyoverdines (pseudobactins) BN8 and BN7, iron chelating molecules that allow the organism to extract iron from the environment, especially under iron-restricted conditions.</text>
</comment>
<comment type="subcellular location">
    <subcellularLocation>
        <location evidence="2">Cell outer membrane</location>
        <topology evidence="2">Multi-pass membrane protein</topology>
    </subcellularLocation>
</comment>
<comment type="induction">
    <text>By iron limitation in addition to the presence of one of the two cognate pseudobactins BN7 or BN8.</text>
</comment>
<comment type="similarity">
    <text evidence="4">Belongs to the TonB-dependent receptor family.</text>
</comment>
<feature type="signal peptide" evidence="1">
    <location>
        <begin position="1"/>
        <end position="45"/>
    </location>
</feature>
<feature type="chain" id="PRO_0000034771" description="Ferric-pyoverdine BN7/BN8 receptor">
    <location>
        <begin position="46"/>
        <end position="809"/>
    </location>
</feature>
<feature type="domain" description="TBDR plug" evidence="2">
    <location>
        <begin position="166"/>
        <end position="273"/>
    </location>
</feature>
<feature type="domain" description="TBDR beta-barrel" evidence="2">
    <location>
        <begin position="278"/>
        <end position="809"/>
    </location>
</feature>
<feature type="short sequence motif" description="TonB C-terminal box">
    <location>
        <begin position="792"/>
        <end position="809"/>
    </location>
</feature>
<dbReference type="EMBL" id="X73598">
    <property type="protein sequence ID" value="CAA51995.1"/>
    <property type="molecule type" value="Genomic_DNA"/>
</dbReference>
<dbReference type="PIR" id="S32899">
    <property type="entry name" value="S32899"/>
</dbReference>
<dbReference type="PDB" id="9CUV">
    <property type="method" value="NMR"/>
    <property type="chains" value="A=47-128"/>
</dbReference>
<dbReference type="PDBsum" id="9CUV"/>
<dbReference type="SASBDB" id="P38047"/>
<dbReference type="SMR" id="P38047"/>
<dbReference type="GO" id="GO:0009279">
    <property type="term" value="C:cell outer membrane"/>
    <property type="evidence" value="ECO:0007669"/>
    <property type="project" value="UniProtKB-SubCell"/>
</dbReference>
<dbReference type="GO" id="GO:0015344">
    <property type="term" value="F:siderophore uptake transmembrane transporter activity"/>
    <property type="evidence" value="ECO:0007669"/>
    <property type="project" value="TreeGrafter"/>
</dbReference>
<dbReference type="GO" id="GO:0038023">
    <property type="term" value="F:signaling receptor activity"/>
    <property type="evidence" value="ECO:0007669"/>
    <property type="project" value="InterPro"/>
</dbReference>
<dbReference type="CDD" id="cd01347">
    <property type="entry name" value="ligand_gated_channel"/>
    <property type="match status" value="1"/>
</dbReference>
<dbReference type="FunFam" id="2.170.130.10:FF:000010">
    <property type="entry name" value="Ferripyoverdine receptor"/>
    <property type="match status" value="1"/>
</dbReference>
<dbReference type="Gene3D" id="3.55.50.30">
    <property type="match status" value="1"/>
</dbReference>
<dbReference type="Gene3D" id="2.40.170.20">
    <property type="entry name" value="TonB-dependent receptor, beta-barrel domain"/>
    <property type="match status" value="1"/>
</dbReference>
<dbReference type="Gene3D" id="2.170.130.10">
    <property type="entry name" value="TonB-dependent receptor, plug domain"/>
    <property type="match status" value="1"/>
</dbReference>
<dbReference type="InterPro" id="IPR012910">
    <property type="entry name" value="Plug_dom"/>
</dbReference>
<dbReference type="InterPro" id="IPR037066">
    <property type="entry name" value="Plug_dom_sf"/>
</dbReference>
<dbReference type="InterPro" id="IPR011662">
    <property type="entry name" value="Secretin/TonB_short_N"/>
</dbReference>
<dbReference type="InterPro" id="IPR039426">
    <property type="entry name" value="TonB-dep_rcpt-like"/>
</dbReference>
<dbReference type="InterPro" id="IPR000531">
    <property type="entry name" value="TonB-dep_rcpt_b-brl"/>
</dbReference>
<dbReference type="InterPro" id="IPR036942">
    <property type="entry name" value="TonB_rcpt_b-brl_sf"/>
</dbReference>
<dbReference type="InterPro" id="IPR010917">
    <property type="entry name" value="TonB_rcpt_CS"/>
</dbReference>
<dbReference type="InterPro" id="IPR010105">
    <property type="entry name" value="TonB_sidphr_rcpt"/>
</dbReference>
<dbReference type="NCBIfam" id="TIGR01783">
    <property type="entry name" value="TonB-siderophor"/>
    <property type="match status" value="1"/>
</dbReference>
<dbReference type="PANTHER" id="PTHR32552">
    <property type="entry name" value="FERRICHROME IRON RECEPTOR-RELATED"/>
    <property type="match status" value="1"/>
</dbReference>
<dbReference type="PANTHER" id="PTHR32552:SF74">
    <property type="entry name" value="HYDROXAMATE SIDEROPHORE RECEPTOR FHUE"/>
    <property type="match status" value="1"/>
</dbReference>
<dbReference type="Pfam" id="PF07715">
    <property type="entry name" value="Plug"/>
    <property type="match status" value="1"/>
</dbReference>
<dbReference type="Pfam" id="PF07660">
    <property type="entry name" value="STN"/>
    <property type="match status" value="1"/>
</dbReference>
<dbReference type="Pfam" id="PF00593">
    <property type="entry name" value="TonB_dep_Rec_b-barrel"/>
    <property type="match status" value="1"/>
</dbReference>
<dbReference type="SMART" id="SM00965">
    <property type="entry name" value="STN"/>
    <property type="match status" value="1"/>
</dbReference>
<dbReference type="SUPFAM" id="SSF56935">
    <property type="entry name" value="Porins"/>
    <property type="match status" value="1"/>
</dbReference>
<dbReference type="PROSITE" id="PS01156">
    <property type="entry name" value="TONB_DEPENDENT_REC_2"/>
    <property type="match status" value="1"/>
</dbReference>
<dbReference type="PROSITE" id="PS52016">
    <property type="entry name" value="TONB_DEPENDENT_REC_3"/>
    <property type="match status" value="1"/>
</dbReference>
<keyword id="KW-0002">3D-structure</keyword>
<keyword id="KW-0998">Cell outer membrane</keyword>
<keyword id="KW-0406">Ion transport</keyword>
<keyword id="KW-0408">Iron</keyword>
<keyword id="KW-0410">Iron transport</keyword>
<keyword id="KW-0472">Membrane</keyword>
<keyword id="KW-0675">Receptor</keyword>
<keyword id="KW-0732">Signal</keyword>
<keyword id="KW-0798">TonB box</keyword>
<keyword id="KW-0812">Transmembrane</keyword>
<keyword id="KW-1134">Transmembrane beta strand</keyword>
<keyword id="KW-0813">Transport</keyword>
<gene>
    <name type="primary">pupB</name>
</gene>